<gene>
    <name type="ORF">ARALYDRAFT_683682</name>
</gene>
<comment type="subunit">
    <text evidence="1">Homodimer and heterodimers.</text>
</comment>
<comment type="subcellular location">
    <subcellularLocation>
        <location evidence="1">Cell membrane</location>
        <topology evidence="1">Multi-pass membrane protein</topology>
    </subcellularLocation>
</comment>
<comment type="similarity">
    <text evidence="3">Belongs to the Casparian strip membrane proteins (CASP) family.</text>
</comment>
<keyword id="KW-1003">Cell membrane</keyword>
<keyword id="KW-0472">Membrane</keyword>
<keyword id="KW-1185">Reference proteome</keyword>
<keyword id="KW-0812">Transmembrane</keyword>
<keyword id="KW-1133">Transmembrane helix</keyword>
<name>CSPLG_ARALL</name>
<proteinExistence type="inferred from homology"/>
<accession>D7MM00</accession>
<sequence length="195" mass="20521">MAKLALAATSGKSCKILLGLRLLAFSATLSAAIVMGLNKETETFVVGKVGNTPIKATFTAKFDHTPAFVFFVVANAMVSFHNLLMIALQIFGGKMEFTGFRLLSVAILDMLNVTLISAAANAAAFMAEVGKNGNKHARWDKICDRFATYCDHGAGALIAAFAGVILMLIISAASISRLAQQNKCCSTTASPSVVP</sequence>
<protein>
    <recommendedName>
        <fullName>CASP-like protein 1B1</fullName>
        <shortName>AlCASPL1B1</shortName>
    </recommendedName>
</protein>
<evidence type="ECO:0000250" key="1"/>
<evidence type="ECO:0000255" key="2"/>
<evidence type="ECO:0000305" key="3"/>
<dbReference type="EMBL" id="GL348720">
    <property type="protein sequence ID" value="EFH39825.1"/>
    <property type="molecule type" value="Genomic_DNA"/>
</dbReference>
<dbReference type="STRING" id="81972.D7MM00"/>
<dbReference type="EnsemblPlants" id="Al_scaffold_0008_502">
    <property type="protein sequence ID" value="Al_scaffold_0008_502"/>
    <property type="gene ID" value="Al_scaffold_0008_502"/>
</dbReference>
<dbReference type="Gramene" id="Al_scaffold_0008_502">
    <property type="protein sequence ID" value="Al_scaffold_0008_502"/>
    <property type="gene ID" value="Al_scaffold_0008_502"/>
</dbReference>
<dbReference type="KEGG" id="aly:9301433"/>
<dbReference type="eggNOG" id="ENOG502RYH6">
    <property type="taxonomic scope" value="Eukaryota"/>
</dbReference>
<dbReference type="HOGENOM" id="CLU_066104_1_0_1"/>
<dbReference type="OrthoDB" id="610574at2759"/>
<dbReference type="Proteomes" id="UP000008694">
    <property type="component" value="Unassembled WGS sequence"/>
</dbReference>
<dbReference type="GO" id="GO:0005886">
    <property type="term" value="C:plasma membrane"/>
    <property type="evidence" value="ECO:0007669"/>
    <property type="project" value="UniProtKB-SubCell"/>
</dbReference>
<dbReference type="InterPro" id="IPR006459">
    <property type="entry name" value="CASP/CASPL"/>
</dbReference>
<dbReference type="InterPro" id="IPR006702">
    <property type="entry name" value="CASP_dom"/>
</dbReference>
<dbReference type="InterPro" id="IPR044173">
    <property type="entry name" value="CASPL"/>
</dbReference>
<dbReference type="NCBIfam" id="TIGR01569">
    <property type="entry name" value="A_tha_TIGR01569"/>
    <property type="match status" value="1"/>
</dbReference>
<dbReference type="PANTHER" id="PTHR36488">
    <property type="entry name" value="CASP-LIKE PROTEIN 1U1"/>
    <property type="match status" value="1"/>
</dbReference>
<dbReference type="PANTHER" id="PTHR36488:SF8">
    <property type="entry name" value="CASP-LIKE PROTEIN 1U1"/>
    <property type="match status" value="1"/>
</dbReference>
<dbReference type="Pfam" id="PF04535">
    <property type="entry name" value="CASP_dom"/>
    <property type="match status" value="1"/>
</dbReference>
<organism>
    <name type="scientific">Arabidopsis lyrata subsp. lyrata</name>
    <name type="common">Lyre-leaved rock-cress</name>
    <dbReference type="NCBI Taxonomy" id="81972"/>
    <lineage>
        <taxon>Eukaryota</taxon>
        <taxon>Viridiplantae</taxon>
        <taxon>Streptophyta</taxon>
        <taxon>Embryophyta</taxon>
        <taxon>Tracheophyta</taxon>
        <taxon>Spermatophyta</taxon>
        <taxon>Magnoliopsida</taxon>
        <taxon>eudicotyledons</taxon>
        <taxon>Gunneridae</taxon>
        <taxon>Pentapetalae</taxon>
        <taxon>rosids</taxon>
        <taxon>malvids</taxon>
        <taxon>Brassicales</taxon>
        <taxon>Brassicaceae</taxon>
        <taxon>Camelineae</taxon>
        <taxon>Arabidopsis</taxon>
    </lineage>
</organism>
<reference key="1">
    <citation type="journal article" date="2011" name="Nat. Genet.">
        <title>The Arabidopsis lyrata genome sequence and the basis of rapid genome size change.</title>
        <authorList>
            <person name="Hu T.T."/>
            <person name="Pattyn P."/>
            <person name="Bakker E.G."/>
            <person name="Cao J."/>
            <person name="Cheng J.-F."/>
            <person name="Clark R.M."/>
            <person name="Fahlgren N."/>
            <person name="Fawcett J.A."/>
            <person name="Grimwood J."/>
            <person name="Gundlach H."/>
            <person name="Haberer G."/>
            <person name="Hollister J.D."/>
            <person name="Ossowski S."/>
            <person name="Ottilar R.P."/>
            <person name="Salamov A.A."/>
            <person name="Schneeberger K."/>
            <person name="Spannagl M."/>
            <person name="Wang X."/>
            <person name="Yang L."/>
            <person name="Nasrallah M.E."/>
            <person name="Bergelson J."/>
            <person name="Carrington J.C."/>
            <person name="Gaut B.S."/>
            <person name="Schmutz J."/>
            <person name="Mayer K.F.X."/>
            <person name="Van de Peer Y."/>
            <person name="Grigoriev I.V."/>
            <person name="Nordborg M."/>
            <person name="Weigel D."/>
            <person name="Guo Y.-L."/>
        </authorList>
    </citation>
    <scope>NUCLEOTIDE SEQUENCE [LARGE SCALE GENOMIC DNA]</scope>
    <source>
        <strain>cv. MN47</strain>
    </source>
</reference>
<reference key="2">
    <citation type="journal article" date="2014" name="Plant Physiol.">
        <title>Functional and evolutionary analysis of the CASPARIAN STRIP MEMBRANE DOMAIN PROTEIN family.</title>
        <authorList>
            <person name="Roppolo D."/>
            <person name="Boeckmann B."/>
            <person name="Pfister A."/>
            <person name="Boutet E."/>
            <person name="Rubio M.C."/>
            <person name="Denervaud-Tendon V."/>
            <person name="Vermeer J.E."/>
            <person name="Gheyselinck J."/>
            <person name="Xenarios I."/>
            <person name="Geldner N."/>
        </authorList>
    </citation>
    <scope>GENE FAMILY</scope>
    <scope>NOMENCLATURE</scope>
</reference>
<feature type="chain" id="PRO_0000412015" description="CASP-like protein 1B1">
    <location>
        <begin position="1"/>
        <end position="195"/>
    </location>
</feature>
<feature type="topological domain" description="Cytoplasmic" evidence="2">
    <location>
        <begin position="1"/>
        <end position="15"/>
    </location>
</feature>
<feature type="transmembrane region" description="Helical" evidence="2">
    <location>
        <begin position="16"/>
        <end position="36"/>
    </location>
</feature>
<feature type="topological domain" description="Extracellular" evidence="2">
    <location>
        <begin position="37"/>
        <end position="67"/>
    </location>
</feature>
<feature type="transmembrane region" description="Helical" evidence="2">
    <location>
        <begin position="68"/>
        <end position="88"/>
    </location>
</feature>
<feature type="topological domain" description="Cytoplasmic" evidence="2">
    <location>
        <begin position="89"/>
        <end position="104"/>
    </location>
</feature>
<feature type="transmembrane region" description="Helical" evidence="2">
    <location>
        <begin position="105"/>
        <end position="125"/>
    </location>
</feature>
<feature type="topological domain" description="Extracellular" evidence="2">
    <location>
        <begin position="126"/>
        <end position="154"/>
    </location>
</feature>
<feature type="transmembrane region" description="Helical" evidence="2">
    <location>
        <begin position="155"/>
        <end position="175"/>
    </location>
</feature>
<feature type="topological domain" description="Cytoplasmic" evidence="2">
    <location>
        <begin position="176"/>
        <end position="195"/>
    </location>
</feature>